<proteinExistence type="inferred from homology"/>
<organism>
    <name type="scientific">Rickettsia typhi (strain ATCC VR-144 / Wilmington)</name>
    <dbReference type="NCBI Taxonomy" id="257363"/>
    <lineage>
        <taxon>Bacteria</taxon>
        <taxon>Pseudomonadati</taxon>
        <taxon>Pseudomonadota</taxon>
        <taxon>Alphaproteobacteria</taxon>
        <taxon>Rickettsiales</taxon>
        <taxon>Rickettsiaceae</taxon>
        <taxon>Rickettsieae</taxon>
        <taxon>Rickettsia</taxon>
        <taxon>typhus group</taxon>
    </lineage>
</organism>
<reference key="1">
    <citation type="journal article" date="2004" name="J. Bacteriol.">
        <title>Complete genome sequence of Rickettsia typhi and comparison with sequences of other Rickettsiae.</title>
        <authorList>
            <person name="McLeod M.P."/>
            <person name="Qin X."/>
            <person name="Karpathy S.E."/>
            <person name="Gioia J."/>
            <person name="Highlander S.K."/>
            <person name="Fox G.E."/>
            <person name="McNeill T.Z."/>
            <person name="Jiang H."/>
            <person name="Muzny D."/>
            <person name="Jacob L.S."/>
            <person name="Hawes A.C."/>
            <person name="Sodergren E."/>
            <person name="Gill R."/>
            <person name="Hume J."/>
            <person name="Morgan M."/>
            <person name="Fan G."/>
            <person name="Amin A.G."/>
            <person name="Gibbs R.A."/>
            <person name="Hong C."/>
            <person name="Yu X.-J."/>
            <person name="Walker D.H."/>
            <person name="Weinstock G.M."/>
        </authorList>
    </citation>
    <scope>NUCLEOTIDE SEQUENCE [LARGE SCALE GENOMIC DNA]</scope>
    <source>
        <strain>ATCC VR-144 / Wilmington</strain>
    </source>
</reference>
<keyword id="KW-0001">2Fe-2S</keyword>
<keyword id="KW-0004">4Fe-4S</keyword>
<keyword id="KW-0408">Iron</keyword>
<keyword id="KW-0411">Iron-sulfur</keyword>
<keyword id="KW-0479">Metal-binding</keyword>
<keyword id="KW-0520">NAD</keyword>
<keyword id="KW-0874">Quinone</keyword>
<keyword id="KW-1278">Translocase</keyword>
<name>NUOG_RICTY</name>
<protein>
    <recommendedName>
        <fullName>NADH-quinone oxidoreductase subunit G</fullName>
        <ecNumber>7.1.1.-</ecNumber>
    </recommendedName>
    <alternativeName>
        <fullName>NADH dehydrogenase I subunit G</fullName>
    </alternativeName>
    <alternativeName>
        <fullName>NDH-1 subunit G</fullName>
    </alternativeName>
</protein>
<evidence type="ECO:0000250" key="1"/>
<evidence type="ECO:0000255" key="2">
    <source>
        <dbReference type="PROSITE-ProRule" id="PRU00465"/>
    </source>
</evidence>
<evidence type="ECO:0000255" key="3">
    <source>
        <dbReference type="PROSITE-ProRule" id="PRU01004"/>
    </source>
</evidence>
<evidence type="ECO:0000255" key="4">
    <source>
        <dbReference type="PROSITE-ProRule" id="PRU01184"/>
    </source>
</evidence>
<evidence type="ECO:0000305" key="5"/>
<gene>
    <name type="primary">nuoG</name>
    <name type="ordered locus">RT0784</name>
</gene>
<feature type="chain" id="PRO_0000287844" description="NADH-quinone oxidoreductase subunit G">
    <location>
        <begin position="1"/>
        <end position="675"/>
    </location>
</feature>
<feature type="domain" description="2Fe-2S ferredoxin-type" evidence="2">
    <location>
        <begin position="1"/>
        <end position="78"/>
    </location>
</feature>
<feature type="domain" description="4Fe-4S His(Cys)3-ligated-type" evidence="4">
    <location>
        <begin position="78"/>
        <end position="117"/>
    </location>
</feature>
<feature type="domain" description="4Fe-4S Mo/W bis-MGD-type" evidence="3">
    <location>
        <begin position="215"/>
        <end position="271"/>
    </location>
</feature>
<feature type="binding site" evidence="1">
    <location>
        <position position="34"/>
    </location>
    <ligand>
        <name>[2Fe-2S] cluster</name>
        <dbReference type="ChEBI" id="CHEBI:190135"/>
    </ligand>
</feature>
<feature type="binding site" evidence="1">
    <location>
        <position position="45"/>
    </location>
    <ligand>
        <name>[2Fe-2S] cluster</name>
        <dbReference type="ChEBI" id="CHEBI:190135"/>
    </ligand>
</feature>
<feature type="binding site" evidence="1">
    <location>
        <position position="48"/>
    </location>
    <ligand>
        <name>[2Fe-2S] cluster</name>
        <dbReference type="ChEBI" id="CHEBI:190135"/>
    </ligand>
</feature>
<feature type="binding site" evidence="1">
    <location>
        <position position="62"/>
    </location>
    <ligand>
        <name>[2Fe-2S] cluster</name>
        <dbReference type="ChEBI" id="CHEBI:190135"/>
    </ligand>
</feature>
<feature type="binding site" evidence="4">
    <location>
        <position position="94"/>
    </location>
    <ligand>
        <name>[4Fe-4S] cluster</name>
        <dbReference type="ChEBI" id="CHEBI:49883"/>
        <label>1</label>
    </ligand>
</feature>
<feature type="binding site" evidence="4">
    <location>
        <position position="98"/>
    </location>
    <ligand>
        <name>[4Fe-4S] cluster</name>
        <dbReference type="ChEBI" id="CHEBI:49883"/>
        <label>1</label>
    </ligand>
</feature>
<feature type="binding site" evidence="4">
    <location>
        <position position="101"/>
    </location>
    <ligand>
        <name>[4Fe-4S] cluster</name>
        <dbReference type="ChEBI" id="CHEBI:49883"/>
        <label>1</label>
    </ligand>
</feature>
<feature type="binding site" evidence="4">
    <location>
        <position position="107"/>
    </location>
    <ligand>
        <name>[4Fe-4S] cluster</name>
        <dbReference type="ChEBI" id="CHEBI:49883"/>
        <label>1</label>
    </ligand>
</feature>
<feature type="binding site" evidence="1">
    <location>
        <position position="146"/>
    </location>
    <ligand>
        <name>[4Fe-4S] cluster</name>
        <dbReference type="ChEBI" id="CHEBI:49883"/>
        <label>2</label>
    </ligand>
</feature>
<feature type="binding site" evidence="1">
    <location>
        <position position="149"/>
    </location>
    <ligand>
        <name>[4Fe-4S] cluster</name>
        <dbReference type="ChEBI" id="CHEBI:49883"/>
        <label>2</label>
    </ligand>
</feature>
<feature type="binding site" evidence="1">
    <location>
        <position position="152"/>
    </location>
    <ligand>
        <name>[4Fe-4S] cluster</name>
        <dbReference type="ChEBI" id="CHEBI:49883"/>
        <label>2</label>
    </ligand>
</feature>
<feature type="binding site" evidence="1">
    <location>
        <position position="196"/>
    </location>
    <ligand>
        <name>[4Fe-4S] cluster</name>
        <dbReference type="ChEBI" id="CHEBI:49883"/>
        <label>2</label>
    </ligand>
</feature>
<sequence>MIKLIIDGSEIEISEGSTVYQACIQAGKQIPHFCYHARLKIAGNCRMCLVEIEKSQKPVASCAMPVSNGMVIHTDTSMVKKAREGVMEFLLINHPLDCPICDQGGECDLQDQAFRYGKGTNRFHENKRSIKDKYMGPLIKTAMTRCIQCTRCIRFANDIAGIEEIGAINRGEHMEVTSYLEQTLDSEISGNMIDICPVGALNSKPYAFKARKWELKHTASIGVHDAEGSNIRIDSRADEIMRILPSVNEAINEAWISDKNRFCYDGLKYQRLDHPYIRKNGKLVEVSWSEALKTIMDKIKSVKPEKIAAIAGSIVSVEAMFMLKILLQKLGSNNYTVNQFNYKIDTSERGNYLFNTTIVGVEKADLCLLIGANIRQIAPILNSRIGRRVRIGALKVVRIGIGHNQTYKIHDLGNDIKIIEDLAVGTHEYTKAFKEAKYPMIIVGDGVYGRDDGYALLSLIHKVVDKYNMMRDDWQGFNILHNHASIVGGLDIGFNTAIKFEGVKLAYLLGADAIPFDKLKSAFIIYQGHHGDVGAMSADVILPSAAYTEQSGIYVNLEGRPQIAQKAVSPVGRAKEDIEIIKEIAGYLKIDIGMDNLQEVRIRLAKEYNIFANIDKITANRFTQFISIDKLSQEPIAARPINYYMTDVISKNSVTMAKCVEAKEERKRDVAKVFY</sequence>
<dbReference type="EC" id="7.1.1.-"/>
<dbReference type="EMBL" id="AE017197">
    <property type="protein sequence ID" value="AAU04240.1"/>
    <property type="molecule type" value="Genomic_DNA"/>
</dbReference>
<dbReference type="RefSeq" id="WP_011191215.1">
    <property type="nucleotide sequence ID" value="NC_006142.1"/>
</dbReference>
<dbReference type="SMR" id="Q68VV2"/>
<dbReference type="KEGG" id="rty:RT0784"/>
<dbReference type="eggNOG" id="COG1034">
    <property type="taxonomic scope" value="Bacteria"/>
</dbReference>
<dbReference type="HOGENOM" id="CLU_000422_11_6_5"/>
<dbReference type="OrthoDB" id="9803192at2"/>
<dbReference type="Proteomes" id="UP000000604">
    <property type="component" value="Chromosome"/>
</dbReference>
<dbReference type="GO" id="GO:0016020">
    <property type="term" value="C:membrane"/>
    <property type="evidence" value="ECO:0007669"/>
    <property type="project" value="InterPro"/>
</dbReference>
<dbReference type="GO" id="GO:0051537">
    <property type="term" value="F:2 iron, 2 sulfur cluster binding"/>
    <property type="evidence" value="ECO:0007669"/>
    <property type="project" value="UniProtKB-KW"/>
</dbReference>
<dbReference type="GO" id="GO:0051539">
    <property type="term" value="F:4 iron, 4 sulfur cluster binding"/>
    <property type="evidence" value="ECO:0007669"/>
    <property type="project" value="UniProtKB-KW"/>
</dbReference>
<dbReference type="GO" id="GO:0046872">
    <property type="term" value="F:metal ion binding"/>
    <property type="evidence" value="ECO:0007669"/>
    <property type="project" value="UniProtKB-KW"/>
</dbReference>
<dbReference type="GO" id="GO:0008137">
    <property type="term" value="F:NADH dehydrogenase (ubiquinone) activity"/>
    <property type="evidence" value="ECO:0007669"/>
    <property type="project" value="InterPro"/>
</dbReference>
<dbReference type="GO" id="GO:0048038">
    <property type="term" value="F:quinone binding"/>
    <property type="evidence" value="ECO:0007669"/>
    <property type="project" value="UniProtKB-KW"/>
</dbReference>
<dbReference type="GO" id="GO:0042773">
    <property type="term" value="P:ATP synthesis coupled electron transport"/>
    <property type="evidence" value="ECO:0007669"/>
    <property type="project" value="InterPro"/>
</dbReference>
<dbReference type="CDD" id="cd00207">
    <property type="entry name" value="fer2"/>
    <property type="match status" value="1"/>
</dbReference>
<dbReference type="CDD" id="cd02773">
    <property type="entry name" value="MopB_Res-Cmplx1_Nad11"/>
    <property type="match status" value="1"/>
</dbReference>
<dbReference type="FunFam" id="3.10.20.740:FF:000001">
    <property type="entry name" value="NADH-quinone oxidoreductase subunit G"/>
    <property type="match status" value="1"/>
</dbReference>
<dbReference type="FunFam" id="3.30.200.210:FF:000002">
    <property type="entry name" value="NADH-ubiquinone oxidoreductase 75 kDa subunit"/>
    <property type="match status" value="1"/>
</dbReference>
<dbReference type="FunFam" id="3.30.70.20:FF:000002">
    <property type="entry name" value="NADH-ubiquinone oxidoreductase 75 kDa subunit"/>
    <property type="match status" value="1"/>
</dbReference>
<dbReference type="Gene3D" id="3.10.20.740">
    <property type="match status" value="1"/>
</dbReference>
<dbReference type="Gene3D" id="3.30.200.210">
    <property type="match status" value="1"/>
</dbReference>
<dbReference type="Gene3D" id="3.30.70.20">
    <property type="match status" value="1"/>
</dbReference>
<dbReference type="Gene3D" id="3.40.50.740">
    <property type="match status" value="1"/>
</dbReference>
<dbReference type="InterPro" id="IPR036010">
    <property type="entry name" value="2Fe-2S_ferredoxin-like_sf"/>
</dbReference>
<dbReference type="InterPro" id="IPR001041">
    <property type="entry name" value="2Fe-2S_ferredoxin-type"/>
</dbReference>
<dbReference type="InterPro" id="IPR006656">
    <property type="entry name" value="Mopterin_OxRdtase"/>
</dbReference>
<dbReference type="InterPro" id="IPR006963">
    <property type="entry name" value="Mopterin_OxRdtase_4Fe-4S_dom"/>
</dbReference>
<dbReference type="InterPro" id="IPR000283">
    <property type="entry name" value="NADH_UbQ_OxRdtase_75kDa_su_CS"/>
</dbReference>
<dbReference type="InterPro" id="IPR054351">
    <property type="entry name" value="NADH_UbQ_OxRdtase_ferredoxin"/>
</dbReference>
<dbReference type="InterPro" id="IPR010228">
    <property type="entry name" value="NADH_UbQ_OxRdtase_Gsu"/>
</dbReference>
<dbReference type="InterPro" id="IPR019574">
    <property type="entry name" value="NADH_UbQ_OxRdtase_Gsu_4Fe4S-bd"/>
</dbReference>
<dbReference type="InterPro" id="IPR015405">
    <property type="entry name" value="NDUFS1-like_C"/>
</dbReference>
<dbReference type="InterPro" id="IPR050123">
    <property type="entry name" value="Prok_molybdopt-oxidoreductase"/>
</dbReference>
<dbReference type="NCBIfam" id="TIGR01973">
    <property type="entry name" value="NuoG"/>
    <property type="match status" value="1"/>
</dbReference>
<dbReference type="PANTHER" id="PTHR43105:SF13">
    <property type="entry name" value="NADH-UBIQUINONE OXIDOREDUCTASE 75 KDA SUBUNIT, MITOCHONDRIAL"/>
    <property type="match status" value="1"/>
</dbReference>
<dbReference type="PANTHER" id="PTHR43105">
    <property type="entry name" value="RESPIRATORY NITRATE REDUCTASE"/>
    <property type="match status" value="1"/>
</dbReference>
<dbReference type="Pfam" id="PF13510">
    <property type="entry name" value="Fer2_4"/>
    <property type="match status" value="1"/>
</dbReference>
<dbReference type="Pfam" id="PF22151">
    <property type="entry name" value="Fer4_NDSU1"/>
    <property type="match status" value="1"/>
</dbReference>
<dbReference type="Pfam" id="PF22117">
    <property type="entry name" value="Fer4_Nqo3"/>
    <property type="match status" value="1"/>
</dbReference>
<dbReference type="Pfam" id="PF00384">
    <property type="entry name" value="Molybdopterin"/>
    <property type="match status" value="1"/>
</dbReference>
<dbReference type="Pfam" id="PF10588">
    <property type="entry name" value="NADH-G_4Fe-4S_3"/>
    <property type="match status" value="1"/>
</dbReference>
<dbReference type="Pfam" id="PF09326">
    <property type="entry name" value="NADH_dhqG_C"/>
    <property type="match status" value="1"/>
</dbReference>
<dbReference type="SMART" id="SM00929">
    <property type="entry name" value="NADH-G_4Fe-4S_3"/>
    <property type="match status" value="1"/>
</dbReference>
<dbReference type="SUPFAM" id="SSF54292">
    <property type="entry name" value="2Fe-2S ferredoxin-like"/>
    <property type="match status" value="1"/>
</dbReference>
<dbReference type="SUPFAM" id="SSF54862">
    <property type="entry name" value="4Fe-4S ferredoxins"/>
    <property type="match status" value="1"/>
</dbReference>
<dbReference type="SUPFAM" id="SSF53706">
    <property type="entry name" value="Formate dehydrogenase/DMSO reductase, domains 1-3"/>
    <property type="match status" value="1"/>
</dbReference>
<dbReference type="PROSITE" id="PS51085">
    <property type="entry name" value="2FE2S_FER_2"/>
    <property type="match status" value="1"/>
</dbReference>
<dbReference type="PROSITE" id="PS51839">
    <property type="entry name" value="4FE4S_HC3"/>
    <property type="match status" value="1"/>
</dbReference>
<dbReference type="PROSITE" id="PS51669">
    <property type="entry name" value="4FE4S_MOW_BIS_MGD"/>
    <property type="match status" value="1"/>
</dbReference>
<dbReference type="PROSITE" id="PS00641">
    <property type="entry name" value="COMPLEX1_75K_1"/>
    <property type="match status" value="1"/>
</dbReference>
<dbReference type="PROSITE" id="PS00642">
    <property type="entry name" value="COMPLEX1_75K_2"/>
    <property type="match status" value="1"/>
</dbReference>
<dbReference type="PROSITE" id="PS00643">
    <property type="entry name" value="COMPLEX1_75K_3"/>
    <property type="match status" value="1"/>
</dbReference>
<accession>Q68VV2</accession>
<comment type="function">
    <text evidence="1">NDH-1 shuttles electrons from NADH, via FMN and iron-sulfur (Fe-S) centers, to quinones in the respiratory chain. Couples the redox reaction to proton translocation (for every two electrons transferred, four hydrogen ions are translocated across the cytoplasmic membrane), and thus conserves the redox energy in a proton gradient (By similarity).</text>
</comment>
<comment type="catalytic activity">
    <reaction>
        <text>a quinone + NADH + 5 H(+)(in) = a quinol + NAD(+) + 4 H(+)(out)</text>
        <dbReference type="Rhea" id="RHEA:57888"/>
        <dbReference type="ChEBI" id="CHEBI:15378"/>
        <dbReference type="ChEBI" id="CHEBI:24646"/>
        <dbReference type="ChEBI" id="CHEBI:57540"/>
        <dbReference type="ChEBI" id="CHEBI:57945"/>
        <dbReference type="ChEBI" id="CHEBI:132124"/>
    </reaction>
</comment>
<comment type="cofactor">
    <cofactor evidence="1">
        <name>[2Fe-2S] cluster</name>
        <dbReference type="ChEBI" id="CHEBI:190135"/>
    </cofactor>
    <text evidence="1">Binds 1 [2Fe-2S] cluster per subunit.</text>
</comment>
<comment type="cofactor">
    <cofactor evidence="1">
        <name>[4Fe-4S] cluster</name>
        <dbReference type="ChEBI" id="CHEBI:49883"/>
    </cofactor>
    <text evidence="1">Binds 2 [4Fe-4S] clusters per subunit.</text>
</comment>
<comment type="similarity">
    <text evidence="5">Belongs to the complex I 75 kDa subunit family.</text>
</comment>